<sequence>MSVLQTELPSLSGKTCLITGGAGGLGKAIAIAFLKAGSNVVICDINEERVKQTSAELEGMGSLLAKTVDITKLSEVQQLFDDISSKFVKLDILINNAAIMDRFEPVGDVDPELWDRVLAVNLTAPLLLSKLAVQGMLLQENTNGSIINIASGSAKAGWLAGKHPITMQTLKHGLIGLTKSTAAFYGTKGIRCNALMLGIIGGTNLNDAFQNGVHPEGRQKLGEILSGVRPLPCDVKDIAELCVSLATGPGWNVVNGAVIAVDRGWTSIVG</sequence>
<reference key="1">
    <citation type="journal article" date="2007" name="Science">
        <title>The Fusarium graminearum genome reveals a link between localized polymorphism and pathogen specialization.</title>
        <authorList>
            <person name="Cuomo C.A."/>
            <person name="Gueldener U."/>
            <person name="Xu J.-R."/>
            <person name="Trail F."/>
            <person name="Turgeon B.G."/>
            <person name="Di Pietro A."/>
            <person name="Walton J.D."/>
            <person name="Ma L.-J."/>
            <person name="Baker S.E."/>
            <person name="Rep M."/>
            <person name="Adam G."/>
            <person name="Antoniw J."/>
            <person name="Baldwin T."/>
            <person name="Calvo S.E."/>
            <person name="Chang Y.-L."/>
            <person name="DeCaprio D."/>
            <person name="Gale L.R."/>
            <person name="Gnerre S."/>
            <person name="Goswami R.S."/>
            <person name="Hammond-Kosack K."/>
            <person name="Harris L.J."/>
            <person name="Hilburn K."/>
            <person name="Kennell J.C."/>
            <person name="Kroken S."/>
            <person name="Magnuson J.K."/>
            <person name="Mannhaupt G."/>
            <person name="Mauceli E.W."/>
            <person name="Mewes H.-W."/>
            <person name="Mitterbauer R."/>
            <person name="Muehlbauer G."/>
            <person name="Muensterkoetter M."/>
            <person name="Nelson D."/>
            <person name="O'Donnell K."/>
            <person name="Ouellet T."/>
            <person name="Qi W."/>
            <person name="Quesneville H."/>
            <person name="Roncero M.I.G."/>
            <person name="Seong K.-Y."/>
            <person name="Tetko I.V."/>
            <person name="Urban M."/>
            <person name="Waalwijk C."/>
            <person name="Ward T.J."/>
            <person name="Yao J."/>
            <person name="Birren B.W."/>
            <person name="Kistler H.C."/>
        </authorList>
    </citation>
    <scope>NUCLEOTIDE SEQUENCE [LARGE SCALE GENOMIC DNA]</scope>
    <source>
        <strain>ATCC MYA-4620 / CBS 123657 / FGSC 9075 / NRRL 31084 / PH-1</strain>
    </source>
</reference>
<reference key="2">
    <citation type="journal article" date="2010" name="Nature">
        <title>Comparative genomics reveals mobile pathogenicity chromosomes in Fusarium.</title>
        <authorList>
            <person name="Ma L.-J."/>
            <person name="van der Does H.C."/>
            <person name="Borkovich K.A."/>
            <person name="Coleman J.J."/>
            <person name="Daboussi M.-J."/>
            <person name="Di Pietro A."/>
            <person name="Dufresne M."/>
            <person name="Freitag M."/>
            <person name="Grabherr M."/>
            <person name="Henrissat B."/>
            <person name="Houterman P.M."/>
            <person name="Kang S."/>
            <person name="Shim W.-B."/>
            <person name="Woloshuk C."/>
            <person name="Xie X."/>
            <person name="Xu J.-R."/>
            <person name="Antoniw J."/>
            <person name="Baker S.E."/>
            <person name="Bluhm B.H."/>
            <person name="Breakspear A."/>
            <person name="Brown D.W."/>
            <person name="Butchko R.A.E."/>
            <person name="Chapman S."/>
            <person name="Coulson R."/>
            <person name="Coutinho P.M."/>
            <person name="Danchin E.G.J."/>
            <person name="Diener A."/>
            <person name="Gale L.R."/>
            <person name="Gardiner D.M."/>
            <person name="Goff S."/>
            <person name="Hammond-Kosack K.E."/>
            <person name="Hilburn K."/>
            <person name="Hua-Van A."/>
            <person name="Jonkers W."/>
            <person name="Kazan K."/>
            <person name="Kodira C.D."/>
            <person name="Koehrsen M."/>
            <person name="Kumar L."/>
            <person name="Lee Y.-H."/>
            <person name="Li L."/>
            <person name="Manners J.M."/>
            <person name="Miranda-Saavedra D."/>
            <person name="Mukherjee M."/>
            <person name="Park G."/>
            <person name="Park J."/>
            <person name="Park S.-Y."/>
            <person name="Proctor R.H."/>
            <person name="Regev A."/>
            <person name="Ruiz-Roldan M.C."/>
            <person name="Sain D."/>
            <person name="Sakthikumar S."/>
            <person name="Sykes S."/>
            <person name="Schwartz D.C."/>
            <person name="Turgeon B.G."/>
            <person name="Wapinski I."/>
            <person name="Yoder O."/>
            <person name="Young S."/>
            <person name="Zeng Q."/>
            <person name="Zhou S."/>
            <person name="Galagan J."/>
            <person name="Cuomo C.A."/>
            <person name="Kistler H.C."/>
            <person name="Rep M."/>
        </authorList>
    </citation>
    <scope>GENOME REANNOTATION</scope>
    <source>
        <strain>ATCC MYA-4620 / CBS 123657 / FGSC 9075 / NRRL 31084 / PH-1</strain>
    </source>
</reference>
<reference key="3">
    <citation type="journal article" date="2015" name="BMC Genomics">
        <title>The completed genome sequence of the pathogenic ascomycete fungus Fusarium graminearum.</title>
        <authorList>
            <person name="King R."/>
            <person name="Urban M."/>
            <person name="Hammond-Kosack M.C.U."/>
            <person name="Hassani-Pak K."/>
            <person name="Hammond-Kosack K.E."/>
        </authorList>
    </citation>
    <scope>NUCLEOTIDE SEQUENCE [LARGE SCALE GENOMIC DNA]</scope>
    <source>
        <strain>ATCC MYA-4620 / CBS 123657 / FGSC 9075 / NRRL 31084 / PH-1</strain>
    </source>
</reference>
<reference key="4">
    <citation type="journal article" date="2020" name="Nat. Commun.">
        <title>Synthetic biology based construction of biological activity-related library of fungal decalin-containing diterpenoid pyrones.</title>
        <authorList>
            <person name="Tsukada K."/>
            <person name="Shinki S."/>
            <person name="Kaneko A."/>
            <person name="Murakami K."/>
            <person name="Irie K."/>
            <person name="Murai M."/>
            <person name="Miyoshi H."/>
            <person name="Dan S."/>
            <person name="Kawaji K."/>
            <person name="Hayashi H."/>
            <person name="Kodama E.N."/>
            <person name="Hori A."/>
            <person name="Salim E."/>
            <person name="Kuraishi T."/>
            <person name="Hirata N."/>
            <person name="Kanda Y."/>
            <person name="Asai T."/>
        </authorList>
    </citation>
    <scope>FUNCTION</scope>
    <scope>CATALYTIC ACTIVITY</scope>
    <scope>PATHWAY</scope>
    <scope>BIOTECHNOLOGY</scope>
</reference>
<organism>
    <name type="scientific">Gibberella zeae (strain ATCC MYA-4620 / CBS 123657 / FGSC 9075 / NRRL 31084 / PH-1)</name>
    <name type="common">Wheat head blight fungus</name>
    <name type="synonym">Fusarium graminearum</name>
    <dbReference type="NCBI Taxonomy" id="229533"/>
    <lineage>
        <taxon>Eukaryota</taxon>
        <taxon>Fungi</taxon>
        <taxon>Dikarya</taxon>
        <taxon>Ascomycota</taxon>
        <taxon>Pezizomycotina</taxon>
        <taxon>Sordariomycetes</taxon>
        <taxon>Hypocreomycetidae</taxon>
        <taxon>Hypocreales</taxon>
        <taxon>Nectriaceae</taxon>
        <taxon>Fusarium</taxon>
    </lineage>
</organism>
<dbReference type="EC" id="1.1.1.-" evidence="3"/>
<dbReference type="EMBL" id="HG970333">
    <property type="protein sequence ID" value="CEF79629.1"/>
    <property type="status" value="ALT_SEQ"/>
    <property type="molecule type" value="Genomic_DNA"/>
</dbReference>
<dbReference type="SMR" id="P9WEW9"/>
<dbReference type="InParanoid" id="P9WEW9"/>
<dbReference type="UniPathway" id="UPA00213"/>
<dbReference type="Proteomes" id="UP000070720">
    <property type="component" value="Chromosome 2"/>
</dbReference>
<dbReference type="GO" id="GO:0016616">
    <property type="term" value="F:oxidoreductase activity, acting on the CH-OH group of donors, NAD or NADP as acceptor"/>
    <property type="evidence" value="ECO:0007669"/>
    <property type="project" value="TreeGrafter"/>
</dbReference>
<dbReference type="GO" id="GO:0048038">
    <property type="term" value="F:quinone binding"/>
    <property type="evidence" value="ECO:0007669"/>
    <property type="project" value="TreeGrafter"/>
</dbReference>
<dbReference type="GO" id="GO:0006633">
    <property type="term" value="P:fatty acid biosynthetic process"/>
    <property type="evidence" value="ECO:0007669"/>
    <property type="project" value="TreeGrafter"/>
</dbReference>
<dbReference type="GO" id="GO:0016114">
    <property type="term" value="P:terpenoid biosynthetic process"/>
    <property type="evidence" value="ECO:0007669"/>
    <property type="project" value="UniProtKB-UniPathway"/>
</dbReference>
<dbReference type="CDD" id="cd05233">
    <property type="entry name" value="SDR_c"/>
    <property type="match status" value="1"/>
</dbReference>
<dbReference type="Gene3D" id="3.40.50.720">
    <property type="entry name" value="NAD(P)-binding Rossmann-like Domain"/>
    <property type="match status" value="1"/>
</dbReference>
<dbReference type="InterPro" id="IPR036291">
    <property type="entry name" value="NAD(P)-bd_dom_sf"/>
</dbReference>
<dbReference type="InterPro" id="IPR002347">
    <property type="entry name" value="SDR_fam"/>
</dbReference>
<dbReference type="PANTHER" id="PTHR42760:SF127">
    <property type="entry name" value="3-KETOACYL-ACYL CARRIER PROTEIN REDUCTASE-RELATED"/>
    <property type="match status" value="1"/>
</dbReference>
<dbReference type="PANTHER" id="PTHR42760">
    <property type="entry name" value="SHORT-CHAIN DEHYDROGENASES/REDUCTASES FAMILY MEMBER"/>
    <property type="match status" value="1"/>
</dbReference>
<dbReference type="Pfam" id="PF13561">
    <property type="entry name" value="adh_short_C2"/>
    <property type="match status" value="1"/>
</dbReference>
<dbReference type="PRINTS" id="PR00081">
    <property type="entry name" value="GDHRDH"/>
</dbReference>
<dbReference type="PRINTS" id="PR00080">
    <property type="entry name" value="SDRFAMILY"/>
</dbReference>
<dbReference type="SUPFAM" id="SSF51735">
    <property type="entry name" value="NAD(P)-binding Rossmann-fold domains"/>
    <property type="match status" value="1"/>
</dbReference>
<evidence type="ECO:0000250" key="1">
    <source>
        <dbReference type="UniProtKB" id="L0E2Z4"/>
    </source>
</evidence>
<evidence type="ECO:0000250" key="2">
    <source>
        <dbReference type="UniProtKB" id="O93868"/>
    </source>
</evidence>
<evidence type="ECO:0000269" key="3">
    <source>
    </source>
</evidence>
<evidence type="ECO:0000303" key="4">
    <source>
    </source>
</evidence>
<evidence type="ECO:0000305" key="5"/>
<evidence type="ECO:0000305" key="6">
    <source>
    </source>
</evidence>
<protein>
    <recommendedName>
        <fullName evidence="4">Short chain dehydrogenase/reductase dpfgG</fullName>
        <ecNumber evidence="3">1.1.1.-</ecNumber>
    </recommendedName>
    <alternativeName>
        <fullName evidence="4">Diterpenoid pyrone biosynthesis cluster protein G</fullName>
    </alternativeName>
</protein>
<feature type="chain" id="PRO_0000451548" description="Short chain dehydrogenase/reductase dpfgG">
    <location>
        <begin position="1"/>
        <end position="270"/>
    </location>
</feature>
<feature type="active site" description="Lowers pKa of active site Tyr" evidence="2">
    <location>
        <position position="171"/>
    </location>
</feature>
<feature type="binding site" evidence="1">
    <location>
        <position position="18"/>
    </location>
    <ligand>
        <name>NADP(+)</name>
        <dbReference type="ChEBI" id="CHEBI:58349"/>
    </ligand>
</feature>
<feature type="binding site" evidence="1">
    <location>
        <position position="69"/>
    </location>
    <ligand>
        <name>NADP(+)</name>
        <dbReference type="ChEBI" id="CHEBI:58349"/>
    </ligand>
</feature>
<feature type="binding site" evidence="2">
    <location>
        <position position="96"/>
    </location>
    <ligand>
        <name>NADP(+)</name>
        <dbReference type="ChEBI" id="CHEBI:58349"/>
    </ligand>
</feature>
<feature type="binding site" evidence="1">
    <location>
        <position position="130"/>
    </location>
    <ligand>
        <name>NADP(+)</name>
        <dbReference type="ChEBI" id="CHEBI:58349"/>
    </ligand>
</feature>
<feature type="binding site" evidence="2">
    <location>
        <position position="171"/>
    </location>
    <ligand>
        <name>NADP(+)</name>
        <dbReference type="ChEBI" id="CHEBI:58349"/>
    </ligand>
</feature>
<feature type="binding site" evidence="2">
    <location>
        <position position="200"/>
    </location>
    <ligand>
        <name>NADP(+)</name>
        <dbReference type="ChEBI" id="CHEBI:58349"/>
    </ligand>
</feature>
<feature type="binding site" evidence="2">
    <location>
        <position position="204"/>
    </location>
    <ligand>
        <name>NADP(+)</name>
        <dbReference type="ChEBI" id="CHEBI:58349"/>
    </ligand>
</feature>
<gene>
    <name evidence="4" type="primary">dpfgG</name>
    <name type="ORF">FG04594</name>
    <name type="ORF">FGRAMPH1_01T15659</name>
</gene>
<name>DPFGG_GIBZE</name>
<keyword id="KW-0521">NADP</keyword>
<keyword id="KW-0560">Oxidoreductase</keyword>
<keyword id="KW-1185">Reference proteome</keyword>
<comment type="function">
    <text evidence="3 6">Short chain dehydrogenase/reductase; part of the gene cluster that mediates the biosynthesis of diterpenoid pyrones (PubMed:32286350). The first step of the pathway is the synthesis of the alpha-pyrone moiety by the polyketide synthase dpfgA via condensation of one acetyl-CoA starter unit with 3 malonyl-CoA units and 2 methylations (Probable). The alpha-pyrone is then combined with geranylgeranyl pyrophosphate (GGPP) formed by the GGPP synthase dpfgD through the action of the prenyltransferase dpfgC to yield a linear alpha-pyrone diterpenoid (Probable). Subsequent steps in the diterpenoid pyrone biosynthetic pathway involve the decalin core formation, which is initiated by the epoxidation of the C10-C11 olefin by the FAD-dependent oxidoreductase dpfgE, and is followed by a cyclization cascade catalyzed by the terpene cyclase dpfgB (Probable). The short chain dehydrogenase/reductase dpfgG then oxidizes the 8S hydroxy group to a ketone and the short chain dehydrogenase/reductase dpfgH reduces the ketone to the 8R hydroxy group to yield higginsianin B (PubMed:32286350). Higginsianin B is further methylated by the methyltransferase dpfgI to produce the intermediate named FDDP B (PubMed:32286350). The cytochrome P450 monooxygenase dfgpJ then catalyzes a three-step oxidation at C-27 to generate a carboxylic acid as well as C-26 hydroxylation (PubMed:32286350). Finally, methyltransferase dpfgK methylates the carboxylic acid generated by dpfgJ, yielding the final diterpenoid pyrones from the pathway which were named FDDP D and FDDP E (PubMed:32286350).</text>
</comment>
<comment type="pathway">
    <text evidence="3">Secondary metabolite biosynthesis; terpenoid biosynthesis.</text>
</comment>
<comment type="biotechnology">
    <text evidence="3">Diterpenoid pyrones display various biological activities and FDDP E shows anti-HIV activity (PubMed:32286350). FDDP D and FDDP E show also inhibitory activity of 42-mer-amyloid beta aggregation that is involved in the pathogenesis of Alzheimer's disease (PubMed:32286350).</text>
</comment>
<comment type="similarity">
    <text evidence="5">Belongs to the short-chain dehydrogenases/reductases (SDR) family.</text>
</comment>
<comment type="sequence caution" evidence="5">
    <conflict type="erroneous gene model prediction">
        <sequence resource="EMBL-CDS" id="CEF79629"/>
    </conflict>
    <text>The predicted gene has been split into 2 genes: dpfgB and dpfgG.</text>
</comment>
<proteinExistence type="evidence at protein level"/>
<accession>P9WEW9</accession>
<accession>A0A098DL10</accession>
<accession>A0A0E0S804</accession>